<sequence length="165" mass="18052">MVNPGSSSQPPPVTASTLSWKRCAGCGGKIADRFLLYAMDSYWHSRCLKCSCCQAQLGEIGTSCYTKSGMILCRNDYIRLFGNSGACSACGQSIPASELVMRAQGNVYHLKCFTCSTCRNRLVPGDRFHYINGSLFCEHDRPTALINGHLNSLQSNPLLPDQKVC</sequence>
<name>LMO42_XENTR</name>
<reference evidence="4" key="1">
    <citation type="submission" date="2006-10" db="EMBL/GenBank/DDBJ databases">
        <authorList>
            <consortium name="Sanger Xenopus tropicalis EST/cDNA project"/>
        </authorList>
    </citation>
    <scope>NUCLEOTIDE SEQUENCE [LARGE SCALE MRNA]</scope>
    <source>
        <tissue evidence="4">Neurula</tissue>
    </source>
</reference>
<reference evidence="4" key="2">
    <citation type="submission" date="2004-06" db="EMBL/GenBank/DDBJ databases">
        <authorList>
            <consortium name="NIH - Xenopus Gene Collection (XGC) project"/>
        </authorList>
    </citation>
    <scope>NUCLEOTIDE SEQUENCE [LARGE SCALE MRNA]</scope>
    <source>
        <strain evidence="3">F6</strain>
    </source>
</reference>
<comment type="function">
    <text evidence="1">Acts as a positive cofactor of GATA transcription factors to establish the identity of the ventral mesoderm during gastrulation. Down-regulation in the dorsal mesoderm is necessary for the proper formation of this territory since, when present, lmo4 may bind ldb1 and restrict the availability of this cofactor for Spemman organizer transcription factors. At neurula stages, suppresses primary neuron differentiation and modulates gene expression at the Isthmic Organizer of the midbrain-hindbrain boundary (By similarity).</text>
</comment>
<evidence type="ECO:0000250" key="1">
    <source>
        <dbReference type="UniProtKB" id="Q8AW92"/>
    </source>
</evidence>
<evidence type="ECO:0000255" key="2">
    <source>
        <dbReference type="PROSITE-ProRule" id="PRU00125"/>
    </source>
</evidence>
<evidence type="ECO:0000312" key="3">
    <source>
        <dbReference type="EMBL" id="AAH75379.1"/>
    </source>
</evidence>
<evidence type="ECO:0000312" key="4">
    <source>
        <dbReference type="EMBL" id="CAJ82708.1"/>
    </source>
</evidence>
<organism>
    <name type="scientific">Xenopus tropicalis</name>
    <name type="common">Western clawed frog</name>
    <name type="synonym">Silurana tropicalis</name>
    <dbReference type="NCBI Taxonomy" id="8364"/>
    <lineage>
        <taxon>Eukaryota</taxon>
        <taxon>Metazoa</taxon>
        <taxon>Chordata</taxon>
        <taxon>Craniata</taxon>
        <taxon>Vertebrata</taxon>
        <taxon>Euteleostomi</taxon>
        <taxon>Amphibia</taxon>
        <taxon>Batrachia</taxon>
        <taxon>Anura</taxon>
        <taxon>Pipoidea</taxon>
        <taxon>Pipidae</taxon>
        <taxon>Xenopodinae</taxon>
        <taxon>Xenopus</taxon>
        <taxon>Silurana</taxon>
    </lineage>
</organism>
<protein>
    <recommendedName>
        <fullName>LIM domain transcription factor LMO4.2</fullName>
    </recommendedName>
    <alternativeName>
        <fullName>LIM domain only protein 4.2</fullName>
        <shortName>LMO-4.2</shortName>
    </alternativeName>
</protein>
<proteinExistence type="evidence at transcript level"/>
<keyword id="KW-0217">Developmental protein</keyword>
<keyword id="KW-0221">Differentiation</keyword>
<keyword id="KW-0306">Gastrulation</keyword>
<keyword id="KW-0440">LIM domain</keyword>
<keyword id="KW-0479">Metal-binding</keyword>
<keyword id="KW-0524">Neurogenesis</keyword>
<keyword id="KW-1185">Reference proteome</keyword>
<keyword id="KW-0677">Repeat</keyword>
<keyword id="KW-0804">Transcription</keyword>
<keyword id="KW-0805">Transcription regulation</keyword>
<keyword id="KW-0862">Zinc</keyword>
<accession>Q6DJ06</accession>
<feature type="chain" id="PRO_0000317224" description="LIM domain transcription factor LMO4.2">
    <location>
        <begin position="1"/>
        <end position="165"/>
    </location>
</feature>
<feature type="domain" description="LIM zinc-binding 1" evidence="2">
    <location>
        <begin position="21"/>
        <end position="83"/>
    </location>
</feature>
<feature type="domain" description="LIM zinc-binding 2" evidence="2">
    <location>
        <begin position="85"/>
        <end position="147"/>
    </location>
</feature>
<gene>
    <name type="primary">lmo4.2</name>
    <name evidence="4" type="synonym">lmo4</name>
    <name type="ORF">TNeu050b22.1</name>
</gene>
<dbReference type="EMBL" id="CR760333">
    <property type="protein sequence ID" value="CAJ82708.1"/>
    <property type="molecule type" value="mRNA"/>
</dbReference>
<dbReference type="EMBL" id="BC075379">
    <property type="protein sequence ID" value="AAH75379.1"/>
    <property type="molecule type" value="mRNA"/>
</dbReference>
<dbReference type="RefSeq" id="NP_001004922.1">
    <property type="nucleotide sequence ID" value="NM_001004922.1"/>
</dbReference>
<dbReference type="BMRB" id="Q6DJ06"/>
<dbReference type="SMR" id="Q6DJ06"/>
<dbReference type="FunCoup" id="Q6DJ06">
    <property type="interactions" value="291"/>
</dbReference>
<dbReference type="STRING" id="8364.ENSXETP00000052271"/>
<dbReference type="PaxDb" id="8364-ENSXETP00000053847"/>
<dbReference type="DNASU" id="448304"/>
<dbReference type="GeneID" id="448304"/>
<dbReference type="KEGG" id="xtr:448304"/>
<dbReference type="AGR" id="Xenbase:XB-GENE-971939"/>
<dbReference type="CTD" id="8543"/>
<dbReference type="Xenbase" id="XB-GENE-971939">
    <property type="gene designation" value="lmo4"/>
</dbReference>
<dbReference type="eggNOG" id="KOG0490">
    <property type="taxonomic scope" value="Eukaryota"/>
</dbReference>
<dbReference type="HOGENOM" id="CLU_001357_7_1_1"/>
<dbReference type="InParanoid" id="Q6DJ06"/>
<dbReference type="OrthoDB" id="6352355at2759"/>
<dbReference type="TreeFam" id="TF351071"/>
<dbReference type="Proteomes" id="UP000008143">
    <property type="component" value="Chromosome 4"/>
</dbReference>
<dbReference type="Bgee" id="ENSXETG00000023295">
    <property type="expression patterns" value="Expressed in brain and 14 other cell types or tissues"/>
</dbReference>
<dbReference type="GO" id="GO:0046872">
    <property type="term" value="F:metal ion binding"/>
    <property type="evidence" value="ECO:0007669"/>
    <property type="project" value="UniProtKB-KW"/>
</dbReference>
<dbReference type="GO" id="GO:0003712">
    <property type="term" value="F:transcription coregulator activity"/>
    <property type="evidence" value="ECO:0000250"/>
    <property type="project" value="UniProtKB"/>
</dbReference>
<dbReference type="GO" id="GO:0030154">
    <property type="term" value="P:cell differentiation"/>
    <property type="evidence" value="ECO:0007669"/>
    <property type="project" value="UniProtKB-KW"/>
</dbReference>
<dbReference type="GO" id="GO:0007369">
    <property type="term" value="P:gastrulation"/>
    <property type="evidence" value="ECO:0007669"/>
    <property type="project" value="UniProtKB-KW"/>
</dbReference>
<dbReference type="GO" id="GO:0007498">
    <property type="term" value="P:mesoderm development"/>
    <property type="evidence" value="ECO:0000250"/>
    <property type="project" value="UniProtKB"/>
</dbReference>
<dbReference type="GO" id="GO:0045665">
    <property type="term" value="P:negative regulation of neuron differentiation"/>
    <property type="evidence" value="ECO:0000250"/>
    <property type="project" value="UniProtKB"/>
</dbReference>
<dbReference type="GO" id="GO:0007399">
    <property type="term" value="P:nervous system development"/>
    <property type="evidence" value="ECO:0007669"/>
    <property type="project" value="UniProtKB-KW"/>
</dbReference>
<dbReference type="GO" id="GO:0045944">
    <property type="term" value="P:positive regulation of transcription by RNA polymerase II"/>
    <property type="evidence" value="ECO:0000250"/>
    <property type="project" value="UniProtKB"/>
</dbReference>
<dbReference type="CDD" id="cd09386">
    <property type="entry name" value="LIM1_LMO4"/>
    <property type="match status" value="1"/>
</dbReference>
<dbReference type="CDD" id="cd09387">
    <property type="entry name" value="LIM2_LMO4"/>
    <property type="match status" value="1"/>
</dbReference>
<dbReference type="FunFam" id="2.10.110.10:FF:000015">
    <property type="entry name" value="LIM domain only 3"/>
    <property type="match status" value="1"/>
</dbReference>
<dbReference type="FunFam" id="2.10.110.10:FF:000051">
    <property type="entry name" value="LIM domain transcription factor LMO4"/>
    <property type="match status" value="1"/>
</dbReference>
<dbReference type="Gene3D" id="2.10.110.10">
    <property type="entry name" value="Cysteine Rich Protein"/>
    <property type="match status" value="2"/>
</dbReference>
<dbReference type="InterPro" id="IPR050945">
    <property type="entry name" value="LMO_RBTN_TF"/>
</dbReference>
<dbReference type="InterPro" id="IPR001781">
    <property type="entry name" value="Znf_LIM"/>
</dbReference>
<dbReference type="PANTHER" id="PTHR45787">
    <property type="entry name" value="LD11652P"/>
    <property type="match status" value="1"/>
</dbReference>
<dbReference type="PANTHER" id="PTHR45787:SF5">
    <property type="entry name" value="LIM DOMAIN TRANSCRIPTION FACTOR LMO4"/>
    <property type="match status" value="1"/>
</dbReference>
<dbReference type="Pfam" id="PF00412">
    <property type="entry name" value="LIM"/>
    <property type="match status" value="2"/>
</dbReference>
<dbReference type="SMART" id="SM00132">
    <property type="entry name" value="LIM"/>
    <property type="match status" value="2"/>
</dbReference>
<dbReference type="SUPFAM" id="SSF57716">
    <property type="entry name" value="Glucocorticoid receptor-like (DNA-binding domain)"/>
    <property type="match status" value="4"/>
</dbReference>
<dbReference type="PROSITE" id="PS00478">
    <property type="entry name" value="LIM_DOMAIN_1"/>
    <property type="match status" value="2"/>
</dbReference>
<dbReference type="PROSITE" id="PS50023">
    <property type="entry name" value="LIM_DOMAIN_2"/>
    <property type="match status" value="2"/>
</dbReference>